<accession>Q1J665</accession>
<reference key="1">
    <citation type="journal article" date="2006" name="Proc. Natl. Acad. Sci. U.S.A.">
        <title>Molecular genetic anatomy of inter- and intraserotype variation in the human bacterial pathogen group A Streptococcus.</title>
        <authorList>
            <person name="Beres S.B."/>
            <person name="Richter E.W."/>
            <person name="Nagiec M.J."/>
            <person name="Sumby P."/>
            <person name="Porcella S.F."/>
            <person name="DeLeo F.R."/>
            <person name="Musser J.M."/>
        </authorList>
    </citation>
    <scope>NUCLEOTIDE SEQUENCE [LARGE SCALE GENOMIC DNA]</scope>
    <source>
        <strain>MGAS10750</strain>
    </source>
</reference>
<name>UVRB_STRPF</name>
<comment type="function">
    <text evidence="1">The UvrABC repair system catalyzes the recognition and processing of DNA lesions. A damage recognition complex composed of 2 UvrA and 2 UvrB subunits scans DNA for abnormalities. Upon binding of the UvrA(2)B(2) complex to a putative damaged site, the DNA wraps around one UvrB monomer. DNA wrap is dependent on ATP binding by UvrB and probably causes local melting of the DNA helix, facilitating insertion of UvrB beta-hairpin between the DNA strands. Then UvrB probes one DNA strand for the presence of a lesion. If a lesion is found the UvrA subunits dissociate and the UvrB-DNA preincision complex is formed. This complex is subsequently bound by UvrC and the second UvrB is released. If no lesion is found, the DNA wraps around the other UvrB subunit that will check the other stand for damage.</text>
</comment>
<comment type="subunit">
    <text evidence="1">Forms a heterotetramer with UvrA during the search for lesions. Interacts with UvrC in an incision complex.</text>
</comment>
<comment type="subcellular location">
    <subcellularLocation>
        <location evidence="1">Cytoplasm</location>
    </subcellularLocation>
</comment>
<comment type="domain">
    <text evidence="1">The beta-hairpin motif is involved in DNA binding.</text>
</comment>
<comment type="similarity">
    <text evidence="1">Belongs to the UvrB family.</text>
</comment>
<organism>
    <name type="scientific">Streptococcus pyogenes serotype M4 (strain MGAS10750)</name>
    <dbReference type="NCBI Taxonomy" id="370554"/>
    <lineage>
        <taxon>Bacteria</taxon>
        <taxon>Bacillati</taxon>
        <taxon>Bacillota</taxon>
        <taxon>Bacilli</taxon>
        <taxon>Lactobacillales</taxon>
        <taxon>Streptococcaceae</taxon>
        <taxon>Streptococcus</taxon>
    </lineage>
</organism>
<gene>
    <name evidence="1" type="primary">uvrB</name>
    <name type="ordered locus">MGAS10750_Spy1168</name>
</gene>
<evidence type="ECO:0000255" key="1">
    <source>
        <dbReference type="HAMAP-Rule" id="MF_00204"/>
    </source>
</evidence>
<evidence type="ECO:0000256" key="2">
    <source>
        <dbReference type="SAM" id="MobiDB-lite"/>
    </source>
</evidence>
<sequence>MIDKRDDKPFKLKSKYKPSGDQPQAIESLVDNIEGGEKAQILLGATGTGKTYTMSQVISKVNKPTLVIAHNKTLAGQLYGEFKEFFPDNAVEYFVSYYDYYQPEAYVPSSDTYIEKDSSVNDEIDKLRHSATSSLLERNDVIVVASVSCIYGLGSPKEYADSAVSLRPGQEISRDTLLNQLVDIQFERNDIDFQRGCFRVRGDVVEVFPASRDEHAFRVEFFGDEIDRICEIESLTGKTIGEVDHLVLFPATHFVTNDEHMEQSIAKIQAELAEQLQLFESEGKLLEAQRLRQRTEYDIEMLREMGYTSGVENYSRHMDGRSPGEPPYTLLDFFPEDFLIMIDESHMTMGQIKGMYNGDQARKQMLVDYGFRLPSALDNRPLRREEFESHVHQIVYVSATPGEYEMSQTNTIIEQIIRPTGLLDPEIDVRSSMGQMDDLLGEINQRVARDERTFITTLTKKMAEDLTDYLKEMGVKVKYMHSDIKTLERTEIIRDLRLGIFDVLIGINLLREGIDVPEVSLVAILDADKEGFLRNERGLIQTIGRAARNVDGHVIMYADKMTDSMQRAIDETARRREIQIAYNKAHGIVPQTIKKDIRGLISISKTSHNDISKEEMDYESMSRGERKEAINALQKQMQEAAELLDFELAAQMRDLILELKLMD</sequence>
<keyword id="KW-0067">ATP-binding</keyword>
<keyword id="KW-0963">Cytoplasm</keyword>
<keyword id="KW-0227">DNA damage</keyword>
<keyword id="KW-0228">DNA excision</keyword>
<keyword id="KW-0234">DNA repair</keyword>
<keyword id="KW-0267">Excision nuclease</keyword>
<keyword id="KW-0347">Helicase</keyword>
<keyword id="KW-0378">Hydrolase</keyword>
<keyword id="KW-0547">Nucleotide-binding</keyword>
<keyword id="KW-0742">SOS response</keyword>
<dbReference type="EMBL" id="CP000262">
    <property type="protein sequence ID" value="ABF38118.1"/>
    <property type="molecule type" value="Genomic_DNA"/>
</dbReference>
<dbReference type="SMR" id="Q1J665"/>
<dbReference type="KEGG" id="spi:MGAS10750_Spy1168"/>
<dbReference type="HOGENOM" id="CLU_009621_2_1_9"/>
<dbReference type="Proteomes" id="UP000002434">
    <property type="component" value="Chromosome"/>
</dbReference>
<dbReference type="GO" id="GO:0005737">
    <property type="term" value="C:cytoplasm"/>
    <property type="evidence" value="ECO:0007669"/>
    <property type="project" value="UniProtKB-SubCell"/>
</dbReference>
<dbReference type="GO" id="GO:0009380">
    <property type="term" value="C:excinuclease repair complex"/>
    <property type="evidence" value="ECO:0007669"/>
    <property type="project" value="InterPro"/>
</dbReference>
<dbReference type="GO" id="GO:0005524">
    <property type="term" value="F:ATP binding"/>
    <property type="evidence" value="ECO:0007669"/>
    <property type="project" value="UniProtKB-UniRule"/>
</dbReference>
<dbReference type="GO" id="GO:0016887">
    <property type="term" value="F:ATP hydrolysis activity"/>
    <property type="evidence" value="ECO:0007669"/>
    <property type="project" value="InterPro"/>
</dbReference>
<dbReference type="GO" id="GO:0003677">
    <property type="term" value="F:DNA binding"/>
    <property type="evidence" value="ECO:0007669"/>
    <property type="project" value="UniProtKB-UniRule"/>
</dbReference>
<dbReference type="GO" id="GO:0009381">
    <property type="term" value="F:excinuclease ABC activity"/>
    <property type="evidence" value="ECO:0007669"/>
    <property type="project" value="UniProtKB-UniRule"/>
</dbReference>
<dbReference type="GO" id="GO:0004386">
    <property type="term" value="F:helicase activity"/>
    <property type="evidence" value="ECO:0007669"/>
    <property type="project" value="UniProtKB-KW"/>
</dbReference>
<dbReference type="GO" id="GO:0006289">
    <property type="term" value="P:nucleotide-excision repair"/>
    <property type="evidence" value="ECO:0007669"/>
    <property type="project" value="UniProtKB-UniRule"/>
</dbReference>
<dbReference type="GO" id="GO:0009432">
    <property type="term" value="P:SOS response"/>
    <property type="evidence" value="ECO:0007669"/>
    <property type="project" value="UniProtKB-UniRule"/>
</dbReference>
<dbReference type="CDD" id="cd17916">
    <property type="entry name" value="DEXHc_UvrB"/>
    <property type="match status" value="1"/>
</dbReference>
<dbReference type="CDD" id="cd18790">
    <property type="entry name" value="SF2_C_UvrB"/>
    <property type="match status" value="1"/>
</dbReference>
<dbReference type="Gene3D" id="3.40.50.300">
    <property type="entry name" value="P-loop containing nucleotide triphosphate hydrolases"/>
    <property type="match status" value="3"/>
</dbReference>
<dbReference type="Gene3D" id="4.10.860.10">
    <property type="entry name" value="UVR domain"/>
    <property type="match status" value="1"/>
</dbReference>
<dbReference type="HAMAP" id="MF_00204">
    <property type="entry name" value="UvrB"/>
    <property type="match status" value="1"/>
</dbReference>
<dbReference type="InterPro" id="IPR006935">
    <property type="entry name" value="Helicase/UvrB_N"/>
</dbReference>
<dbReference type="InterPro" id="IPR014001">
    <property type="entry name" value="Helicase_ATP-bd"/>
</dbReference>
<dbReference type="InterPro" id="IPR001650">
    <property type="entry name" value="Helicase_C-like"/>
</dbReference>
<dbReference type="InterPro" id="IPR027417">
    <property type="entry name" value="P-loop_NTPase"/>
</dbReference>
<dbReference type="InterPro" id="IPR001943">
    <property type="entry name" value="UVR_dom"/>
</dbReference>
<dbReference type="InterPro" id="IPR036876">
    <property type="entry name" value="UVR_dom_sf"/>
</dbReference>
<dbReference type="InterPro" id="IPR004807">
    <property type="entry name" value="UvrB"/>
</dbReference>
<dbReference type="InterPro" id="IPR041471">
    <property type="entry name" value="UvrB_inter"/>
</dbReference>
<dbReference type="InterPro" id="IPR024759">
    <property type="entry name" value="UvrB_YAD/RRR_dom"/>
</dbReference>
<dbReference type="NCBIfam" id="NF003673">
    <property type="entry name" value="PRK05298.1"/>
    <property type="match status" value="1"/>
</dbReference>
<dbReference type="NCBIfam" id="TIGR00631">
    <property type="entry name" value="uvrb"/>
    <property type="match status" value="1"/>
</dbReference>
<dbReference type="PANTHER" id="PTHR24029">
    <property type="entry name" value="UVRABC SYSTEM PROTEIN B"/>
    <property type="match status" value="1"/>
</dbReference>
<dbReference type="PANTHER" id="PTHR24029:SF0">
    <property type="entry name" value="UVRABC SYSTEM PROTEIN B"/>
    <property type="match status" value="1"/>
</dbReference>
<dbReference type="Pfam" id="PF00271">
    <property type="entry name" value="Helicase_C"/>
    <property type="match status" value="1"/>
</dbReference>
<dbReference type="Pfam" id="PF04851">
    <property type="entry name" value="ResIII"/>
    <property type="match status" value="1"/>
</dbReference>
<dbReference type="Pfam" id="PF02151">
    <property type="entry name" value="UVR"/>
    <property type="match status" value="1"/>
</dbReference>
<dbReference type="Pfam" id="PF12344">
    <property type="entry name" value="UvrB"/>
    <property type="match status" value="1"/>
</dbReference>
<dbReference type="Pfam" id="PF17757">
    <property type="entry name" value="UvrB_inter"/>
    <property type="match status" value="1"/>
</dbReference>
<dbReference type="SMART" id="SM00487">
    <property type="entry name" value="DEXDc"/>
    <property type="match status" value="1"/>
</dbReference>
<dbReference type="SMART" id="SM00490">
    <property type="entry name" value="HELICc"/>
    <property type="match status" value="1"/>
</dbReference>
<dbReference type="SUPFAM" id="SSF46600">
    <property type="entry name" value="C-terminal UvrC-binding domain of UvrB"/>
    <property type="match status" value="1"/>
</dbReference>
<dbReference type="SUPFAM" id="SSF52540">
    <property type="entry name" value="P-loop containing nucleoside triphosphate hydrolases"/>
    <property type="match status" value="2"/>
</dbReference>
<dbReference type="PROSITE" id="PS51192">
    <property type="entry name" value="HELICASE_ATP_BIND_1"/>
    <property type="match status" value="1"/>
</dbReference>
<dbReference type="PROSITE" id="PS51194">
    <property type="entry name" value="HELICASE_CTER"/>
    <property type="match status" value="1"/>
</dbReference>
<dbReference type="PROSITE" id="PS50151">
    <property type="entry name" value="UVR"/>
    <property type="match status" value="1"/>
</dbReference>
<protein>
    <recommendedName>
        <fullName evidence="1">UvrABC system protein B</fullName>
        <shortName evidence="1">Protein UvrB</shortName>
    </recommendedName>
    <alternativeName>
        <fullName evidence="1">Excinuclease ABC subunit B</fullName>
    </alternativeName>
</protein>
<proteinExistence type="inferred from homology"/>
<feature type="chain" id="PRO_1000077929" description="UvrABC system protein B">
    <location>
        <begin position="1"/>
        <end position="663"/>
    </location>
</feature>
<feature type="domain" description="Helicase ATP-binding" evidence="1">
    <location>
        <begin position="31"/>
        <end position="271"/>
    </location>
</feature>
<feature type="domain" description="Helicase C-terminal" evidence="1">
    <location>
        <begin position="435"/>
        <end position="601"/>
    </location>
</feature>
<feature type="domain" description="UVR" evidence="1">
    <location>
        <begin position="627"/>
        <end position="662"/>
    </location>
</feature>
<feature type="region of interest" description="Disordered" evidence="2">
    <location>
        <begin position="1"/>
        <end position="23"/>
    </location>
</feature>
<feature type="short sequence motif" description="Beta-hairpin">
    <location>
        <begin position="97"/>
        <end position="120"/>
    </location>
</feature>
<feature type="compositionally biased region" description="Basic and acidic residues" evidence="2">
    <location>
        <begin position="1"/>
        <end position="10"/>
    </location>
</feature>
<feature type="binding site" evidence="1">
    <location>
        <begin position="44"/>
        <end position="51"/>
    </location>
    <ligand>
        <name>ATP</name>
        <dbReference type="ChEBI" id="CHEBI:30616"/>
    </ligand>
</feature>